<feature type="signal peptide" evidence="1">
    <location>
        <begin position="1"/>
        <end position="21"/>
    </location>
</feature>
<feature type="chain" id="PRO_0000022693" description="Glycoprotein Xg">
    <location>
        <begin position="22"/>
        <end position="180"/>
    </location>
</feature>
<feature type="topological domain" description="Extracellular" evidence="1">
    <location>
        <begin position="22"/>
        <end position="142"/>
    </location>
</feature>
<feature type="transmembrane region" description="Helical" evidence="1">
    <location>
        <begin position="143"/>
        <end position="163"/>
    </location>
</feature>
<feature type="topological domain" description="Cytoplasmic" evidence="1">
    <location>
        <begin position="164"/>
        <end position="180"/>
    </location>
</feature>
<feature type="region of interest" description="Disordered" evidence="2">
    <location>
        <begin position="28"/>
        <end position="133"/>
    </location>
</feature>
<feature type="compositionally biased region" description="Pro residues" evidence="2">
    <location>
        <begin position="47"/>
        <end position="57"/>
    </location>
</feature>
<feature type="splice variant" id="VSP_037319" description="In isoform 2." evidence="6">
    <original>G</original>
    <variation>GS</variation>
    <location>
        <position position="85"/>
    </location>
</feature>
<feature type="splice variant" id="VSP_037320" description="In isoform 3." evidence="6">
    <original>G</original>
    <variation>GRGGYRLNSRYGNTYG</variation>
    <location>
        <position position="125"/>
    </location>
</feature>
<feature type="sequence variant" id="VAR_054063" description="In dbSNP:rs5939319." evidence="4">
    <original>D</original>
    <variation>N</variation>
    <location>
        <position position="60"/>
    </location>
</feature>
<feature type="sequence conflict" description="In Ref. 5; AAI00766." evidence="7" ref="5">
    <original>L</original>
    <variation>P</variation>
    <location sequence="P55808-3">
        <position position="131"/>
    </location>
</feature>
<dbReference type="EMBL" id="X96421">
    <property type="status" value="NOT_ANNOTATED_CDS"/>
    <property type="molecule type" value="Genomic_DNA"/>
</dbReference>
<dbReference type="EMBL" id="AF380356">
    <property type="protein sequence ID" value="AAL04055.1"/>
    <property type="molecule type" value="mRNA"/>
</dbReference>
<dbReference type="EMBL" id="AF534880">
    <property type="protein sequence ID" value="AAN03481.1"/>
    <property type="molecule type" value="mRNA"/>
</dbReference>
<dbReference type="EMBL" id="AC006209">
    <property type="status" value="NOT_ANNOTATED_CDS"/>
    <property type="molecule type" value="Genomic_DNA"/>
</dbReference>
<dbReference type="EMBL" id="AC138085">
    <property type="status" value="NOT_ANNOTATED_CDS"/>
    <property type="molecule type" value="Genomic_DNA"/>
</dbReference>
<dbReference type="EMBL" id="BC100765">
    <property type="protein sequence ID" value="AAI00766.1"/>
    <property type="molecule type" value="mRNA"/>
</dbReference>
<dbReference type="EMBL" id="BC100766">
    <property type="protein sequence ID" value="AAI00767.1"/>
    <property type="molecule type" value="mRNA"/>
</dbReference>
<dbReference type="EMBL" id="BC100767">
    <property type="protein sequence ID" value="AAI00768.1"/>
    <property type="molecule type" value="mRNA"/>
</dbReference>
<dbReference type="CCDS" id="CCDS14120.1">
    <molecule id="P55808-1"/>
</dbReference>
<dbReference type="CCDS" id="CCDS48073.1">
    <molecule id="P55808-3"/>
</dbReference>
<dbReference type="PIR" id="S43791">
    <property type="entry name" value="S43791"/>
</dbReference>
<dbReference type="RefSeq" id="NP_001135391.1">
    <molecule id="P55808-3"/>
    <property type="nucleotide sequence ID" value="NM_001141919.2"/>
</dbReference>
<dbReference type="RefSeq" id="NP_001135392.1">
    <molecule id="P55808-2"/>
    <property type="nucleotide sequence ID" value="NM_001141920.2"/>
</dbReference>
<dbReference type="RefSeq" id="NP_780778.1">
    <molecule id="P55808-1"/>
    <property type="nucleotide sequence ID" value="NM_175569.3"/>
</dbReference>
<dbReference type="FunCoup" id="P55808">
    <property type="interactions" value="89"/>
</dbReference>
<dbReference type="STRING" id="9606.ENSP00000494087"/>
<dbReference type="iPTMnet" id="P55808"/>
<dbReference type="PhosphoSitePlus" id="P55808"/>
<dbReference type="BioMuta" id="XG"/>
<dbReference type="DMDM" id="2499136"/>
<dbReference type="MassIVE" id="P55808"/>
<dbReference type="PeptideAtlas" id="P55808"/>
<dbReference type="ProteomicsDB" id="56868">
    <molecule id="P55808-1"/>
</dbReference>
<dbReference type="ProteomicsDB" id="56870">
    <molecule id="P55808-3"/>
</dbReference>
<dbReference type="Antibodypedia" id="7780">
    <property type="antibodies" value="46 antibodies from 14 providers"/>
</dbReference>
<dbReference type="DNASU" id="7499"/>
<dbReference type="Ensembl" id="ENST00000381174.10">
    <molecule id="P55808-1"/>
    <property type="protein sequence ID" value="ENSP00000370566.5"/>
    <property type="gene ID" value="ENSG00000124343.14"/>
</dbReference>
<dbReference type="Ensembl" id="ENST00000644266.2">
    <molecule id="P55808-3"/>
    <property type="protein sequence ID" value="ENSP00000494087.1"/>
    <property type="gene ID" value="ENSG00000124343.14"/>
</dbReference>
<dbReference type="GeneID" id="7499"/>
<dbReference type="KEGG" id="hsa:7499"/>
<dbReference type="MANE-Select" id="ENST00000644266.2">
    <molecule id="P55808-3"/>
    <property type="protein sequence ID" value="ENSP00000494087.1"/>
    <property type="RefSeq nucleotide sequence ID" value="NM_001141919.2"/>
    <property type="RefSeq protein sequence ID" value="NP_001135391.1"/>
</dbReference>
<dbReference type="UCSC" id="uc004cqp.5">
    <molecule id="P55808-1"/>
    <property type="organism name" value="human"/>
</dbReference>
<dbReference type="AGR" id="HGNC:12806"/>
<dbReference type="CTD" id="7499"/>
<dbReference type="DisGeNET" id="7499"/>
<dbReference type="GeneCards" id="XG"/>
<dbReference type="HGNC" id="HGNC:12806">
    <property type="gene designation" value="XG"/>
</dbReference>
<dbReference type="HPA" id="ENSG00000124343">
    <property type="expression patterns" value="Tissue enhanced (adipose tissue, skin)"/>
</dbReference>
<dbReference type="MIM" id="300879">
    <property type="type" value="gene"/>
</dbReference>
<dbReference type="MIM" id="314700">
    <property type="type" value="phenotype"/>
</dbReference>
<dbReference type="neXtProt" id="NX_P55808"/>
<dbReference type="OpenTargets" id="ENSG00000124343"/>
<dbReference type="PharmGKB" id="PA37405"/>
<dbReference type="VEuPathDB" id="HostDB:ENSG00000124343"/>
<dbReference type="eggNOG" id="ENOG502TEY7">
    <property type="taxonomic scope" value="Eukaryota"/>
</dbReference>
<dbReference type="GeneTree" id="ENSGT00510000049811"/>
<dbReference type="HOGENOM" id="CLU_1582194_0_0_1"/>
<dbReference type="InParanoid" id="P55808"/>
<dbReference type="OMA" id="EHHFNHG"/>
<dbReference type="OrthoDB" id="9539977at2759"/>
<dbReference type="PAN-GO" id="P55808">
    <property type="GO annotations" value="4 GO annotations based on evolutionary models"/>
</dbReference>
<dbReference type="PhylomeDB" id="P55808"/>
<dbReference type="TreeFam" id="TF336273"/>
<dbReference type="PathwayCommons" id="P55808"/>
<dbReference type="BioGRID-ORCS" id="7499">
    <property type="hits" value="11 hits in 764 CRISPR screens"/>
</dbReference>
<dbReference type="ChiTaRS" id="XG">
    <property type="organism name" value="human"/>
</dbReference>
<dbReference type="GenomeRNAi" id="7499"/>
<dbReference type="Pharos" id="P55808">
    <property type="development level" value="Tdark"/>
</dbReference>
<dbReference type="PRO" id="PR:P55808"/>
<dbReference type="Proteomes" id="UP000005640">
    <property type="component" value="Chromosome X"/>
</dbReference>
<dbReference type="RNAct" id="P55808">
    <property type="molecule type" value="protein"/>
</dbReference>
<dbReference type="Bgee" id="ENSG00000124343">
    <property type="expression patterns" value="Expressed in calcaneal tendon and 133 other cell types or tissues"/>
</dbReference>
<dbReference type="ExpressionAtlas" id="P55808">
    <property type="expression patterns" value="baseline and differential"/>
</dbReference>
<dbReference type="GO" id="GO:0005886">
    <property type="term" value="C:plasma membrane"/>
    <property type="evidence" value="ECO:0000314"/>
    <property type="project" value="UniProtKB"/>
</dbReference>
<dbReference type="GO" id="GO:0034109">
    <property type="term" value="P:homotypic cell-cell adhesion"/>
    <property type="evidence" value="ECO:0000318"/>
    <property type="project" value="GO_Central"/>
</dbReference>
<dbReference type="GO" id="GO:2000391">
    <property type="term" value="P:positive regulation of neutrophil extravasation"/>
    <property type="evidence" value="ECO:0000318"/>
    <property type="project" value="GO_Central"/>
</dbReference>
<dbReference type="GO" id="GO:0072683">
    <property type="term" value="P:T cell extravasation"/>
    <property type="evidence" value="ECO:0000318"/>
    <property type="project" value="GO_Central"/>
</dbReference>
<dbReference type="InterPro" id="IPR022078">
    <property type="entry name" value="CD99L2"/>
</dbReference>
<dbReference type="PANTHER" id="PTHR15076">
    <property type="entry name" value="CD99/MIC2 PROTEIN RELATED"/>
    <property type="match status" value="1"/>
</dbReference>
<dbReference type="PANTHER" id="PTHR15076:SF4">
    <property type="entry name" value="GLYCOPROTEIN XG"/>
    <property type="match status" value="1"/>
</dbReference>
<dbReference type="Pfam" id="PF12301">
    <property type="entry name" value="CD99L2"/>
    <property type="match status" value="1"/>
</dbReference>
<sequence>MESWWGLPCLAFLCFLMHARGQRDFDLADALDDPEPTKKPNSDIYPKPKPPYYPQPENPDSGGNIYPRPKPRPQPQPGNSGNSGGYFNDVDRDDGRYPPRPRPRPPAGGGGGGYSSYGNSDNTHGGDHHSTYGNPEGNMVAKIVSPIVSVVVVTLLGAAASYFKLNNRRNCFRTHEPENV</sequence>
<keyword id="KW-0025">Alternative splicing</keyword>
<keyword id="KW-0095">Blood group antigen</keyword>
<keyword id="KW-1003">Cell membrane</keyword>
<keyword id="KW-0325">Glycoprotein</keyword>
<keyword id="KW-0472">Membrane</keyword>
<keyword id="KW-1267">Proteomics identification</keyword>
<keyword id="KW-1185">Reference proteome</keyword>
<keyword id="KW-0732">Signal</keyword>
<keyword id="KW-0812">Transmembrane</keyword>
<keyword id="KW-1133">Transmembrane helix</keyword>
<gene>
    <name type="primary">XG</name>
    <name type="synonym">PBDX</name>
</gene>
<proteinExistence type="evidence at protein level"/>
<name>XG_HUMAN</name>
<protein>
    <recommendedName>
        <fullName>Glycoprotein Xg</fullName>
    </recommendedName>
    <alternativeName>
        <fullName>Protein PBDX</fullName>
    </alternativeName>
</protein>
<accession>P55808</accession>
<accession>E9PCH1</accession>
<accession>Q496N8</accession>
<accession>Q496N9</accession>
<accession>Q496P0</accession>
<accession>Q71BZ5</accession>
<evidence type="ECO:0000255" key="1"/>
<evidence type="ECO:0000256" key="2">
    <source>
        <dbReference type="SAM" id="MobiDB-lite"/>
    </source>
</evidence>
<evidence type="ECO:0000269" key="3">
    <source>
    </source>
</evidence>
<evidence type="ECO:0000269" key="4">
    <source>
    </source>
</evidence>
<evidence type="ECO:0000269" key="5">
    <source>
    </source>
</evidence>
<evidence type="ECO:0000303" key="6">
    <source>
    </source>
</evidence>
<evidence type="ECO:0000305" key="7"/>
<evidence type="ECO:0000305" key="8">
    <source>
    </source>
</evidence>
<comment type="subcellular location">
    <subcellularLocation>
        <location evidence="5">Cell membrane</location>
        <topology evidence="5">Single-pass type I membrane protein</topology>
    </subcellularLocation>
</comment>
<comment type="alternative products">
    <event type="alternative splicing"/>
    <isoform>
        <id>P55808-1</id>
        <name>1</name>
        <sequence type="displayed"/>
    </isoform>
    <isoform>
        <id>P55808-2</id>
        <name>2</name>
        <sequence type="described" ref="VSP_037319"/>
    </isoform>
    <isoform>
        <id>P55808-3</id>
        <name>3</name>
        <sequence type="described" ref="VSP_037320"/>
    </isoform>
</comment>
<comment type="tissue specificity">
    <text evidence="3">Expressed in erythroid tissues, including thymus, bone marrow and fetal liver, and in several nonerythroid tissues, such as heart, placenta, skeletal muscle, thyroid and trachea, as well as in skin fibroblasts. Expression is low or undetectable in other tissues.</text>
</comment>
<comment type="PTM">
    <text evidence="7">O-glycosylated.</text>
</comment>
<comment type="polymorphism">
    <text evidence="8">XG is responsible for the Xg blood group system.</text>
</comment>
<comment type="miscellaneous">
    <text>The gene coding for this protein is located in the pseudoautosomal region 1 (PAR1) of X and Y chromosomes.</text>
</comment>
<comment type="similarity">
    <text evidence="7">Belongs to the CD99 family.</text>
</comment>
<reference key="1">
    <citation type="journal article" date="1994" name="Nat. Genet.">
        <title>Cloning of PBDX, an MIC2-related gene that spans the pseudoautosomal boundary on chromosome Xp.</title>
        <authorList>
            <person name="Ellis N.A."/>
            <person name="Ye T.Z."/>
            <person name="Patton S."/>
            <person name="German J."/>
            <person name="Goodfellow P.N."/>
            <person name="Weller P."/>
        </authorList>
    </citation>
    <scope>NUCLEOTIDE SEQUENCE [GENOMIC DNA]</scope>
    <source>
        <tissue>Bone marrow</tissue>
    </source>
</reference>
<reference key="2">
    <citation type="submission" date="2001-05" db="EMBL/GenBank/DDBJ databases">
        <title>Identification of PBDX gene highly expressed in human cornea.</title>
        <authorList>
            <person name="Naoko S."/>
            <person name="Fujiki K."/>
            <person name="Kanai A."/>
            <person name="Tanaka Y."/>
            <person name="Iwata T."/>
        </authorList>
    </citation>
    <scope>NUCLEOTIDE SEQUENCE [MRNA] (ISOFORM 1)</scope>
</reference>
<reference key="3">
    <citation type="journal article" date="2005" name="Nature">
        <title>The DNA sequence of the human X chromosome.</title>
        <authorList>
            <person name="Ross M.T."/>
            <person name="Grafham D.V."/>
            <person name="Coffey A.J."/>
            <person name="Scherer S."/>
            <person name="McLay K."/>
            <person name="Muzny D."/>
            <person name="Platzer M."/>
            <person name="Howell G.R."/>
            <person name="Burrows C."/>
            <person name="Bird C.P."/>
            <person name="Frankish A."/>
            <person name="Lovell F.L."/>
            <person name="Howe K.L."/>
            <person name="Ashurst J.L."/>
            <person name="Fulton R.S."/>
            <person name="Sudbrak R."/>
            <person name="Wen G."/>
            <person name="Jones M.C."/>
            <person name="Hurles M.E."/>
            <person name="Andrews T.D."/>
            <person name="Scott C.E."/>
            <person name="Searle S."/>
            <person name="Ramser J."/>
            <person name="Whittaker A."/>
            <person name="Deadman R."/>
            <person name="Carter N.P."/>
            <person name="Hunt S.E."/>
            <person name="Chen R."/>
            <person name="Cree A."/>
            <person name="Gunaratne P."/>
            <person name="Havlak P."/>
            <person name="Hodgson A."/>
            <person name="Metzker M.L."/>
            <person name="Richards S."/>
            <person name="Scott G."/>
            <person name="Steffen D."/>
            <person name="Sodergren E."/>
            <person name="Wheeler D.A."/>
            <person name="Worley K.C."/>
            <person name="Ainscough R."/>
            <person name="Ambrose K.D."/>
            <person name="Ansari-Lari M.A."/>
            <person name="Aradhya S."/>
            <person name="Ashwell R.I."/>
            <person name="Babbage A.K."/>
            <person name="Bagguley C.L."/>
            <person name="Ballabio A."/>
            <person name="Banerjee R."/>
            <person name="Barker G.E."/>
            <person name="Barlow K.F."/>
            <person name="Barrett I.P."/>
            <person name="Bates K.N."/>
            <person name="Beare D.M."/>
            <person name="Beasley H."/>
            <person name="Beasley O."/>
            <person name="Beck A."/>
            <person name="Bethel G."/>
            <person name="Blechschmidt K."/>
            <person name="Brady N."/>
            <person name="Bray-Allen S."/>
            <person name="Bridgeman A.M."/>
            <person name="Brown A.J."/>
            <person name="Brown M.J."/>
            <person name="Bonnin D."/>
            <person name="Bruford E.A."/>
            <person name="Buhay C."/>
            <person name="Burch P."/>
            <person name="Burford D."/>
            <person name="Burgess J."/>
            <person name="Burrill W."/>
            <person name="Burton J."/>
            <person name="Bye J.M."/>
            <person name="Carder C."/>
            <person name="Carrel L."/>
            <person name="Chako J."/>
            <person name="Chapman J.C."/>
            <person name="Chavez D."/>
            <person name="Chen E."/>
            <person name="Chen G."/>
            <person name="Chen Y."/>
            <person name="Chen Z."/>
            <person name="Chinault C."/>
            <person name="Ciccodicola A."/>
            <person name="Clark S.Y."/>
            <person name="Clarke G."/>
            <person name="Clee C.M."/>
            <person name="Clegg S."/>
            <person name="Clerc-Blankenburg K."/>
            <person name="Clifford K."/>
            <person name="Cobley V."/>
            <person name="Cole C.G."/>
            <person name="Conquer J.S."/>
            <person name="Corby N."/>
            <person name="Connor R.E."/>
            <person name="David R."/>
            <person name="Davies J."/>
            <person name="Davis C."/>
            <person name="Davis J."/>
            <person name="Delgado O."/>
            <person name="Deshazo D."/>
            <person name="Dhami P."/>
            <person name="Ding Y."/>
            <person name="Dinh H."/>
            <person name="Dodsworth S."/>
            <person name="Draper H."/>
            <person name="Dugan-Rocha S."/>
            <person name="Dunham A."/>
            <person name="Dunn M."/>
            <person name="Durbin K.J."/>
            <person name="Dutta I."/>
            <person name="Eades T."/>
            <person name="Ellwood M."/>
            <person name="Emery-Cohen A."/>
            <person name="Errington H."/>
            <person name="Evans K.L."/>
            <person name="Faulkner L."/>
            <person name="Francis F."/>
            <person name="Frankland J."/>
            <person name="Fraser A.E."/>
            <person name="Galgoczy P."/>
            <person name="Gilbert J."/>
            <person name="Gill R."/>
            <person name="Gloeckner G."/>
            <person name="Gregory S.G."/>
            <person name="Gribble S."/>
            <person name="Griffiths C."/>
            <person name="Grocock R."/>
            <person name="Gu Y."/>
            <person name="Gwilliam R."/>
            <person name="Hamilton C."/>
            <person name="Hart E.A."/>
            <person name="Hawes A."/>
            <person name="Heath P.D."/>
            <person name="Heitmann K."/>
            <person name="Hennig S."/>
            <person name="Hernandez J."/>
            <person name="Hinzmann B."/>
            <person name="Ho S."/>
            <person name="Hoffs M."/>
            <person name="Howden P.J."/>
            <person name="Huckle E.J."/>
            <person name="Hume J."/>
            <person name="Hunt P.J."/>
            <person name="Hunt A.R."/>
            <person name="Isherwood J."/>
            <person name="Jacob L."/>
            <person name="Johnson D."/>
            <person name="Jones S."/>
            <person name="de Jong P.J."/>
            <person name="Joseph S.S."/>
            <person name="Keenan S."/>
            <person name="Kelly S."/>
            <person name="Kershaw J.K."/>
            <person name="Khan Z."/>
            <person name="Kioschis P."/>
            <person name="Klages S."/>
            <person name="Knights A.J."/>
            <person name="Kosiura A."/>
            <person name="Kovar-Smith C."/>
            <person name="Laird G.K."/>
            <person name="Langford C."/>
            <person name="Lawlor S."/>
            <person name="Leversha M."/>
            <person name="Lewis L."/>
            <person name="Liu W."/>
            <person name="Lloyd C."/>
            <person name="Lloyd D.M."/>
            <person name="Loulseged H."/>
            <person name="Loveland J.E."/>
            <person name="Lovell J.D."/>
            <person name="Lozado R."/>
            <person name="Lu J."/>
            <person name="Lyne R."/>
            <person name="Ma J."/>
            <person name="Maheshwari M."/>
            <person name="Matthews L.H."/>
            <person name="McDowall J."/>
            <person name="McLaren S."/>
            <person name="McMurray A."/>
            <person name="Meidl P."/>
            <person name="Meitinger T."/>
            <person name="Milne S."/>
            <person name="Miner G."/>
            <person name="Mistry S.L."/>
            <person name="Morgan M."/>
            <person name="Morris S."/>
            <person name="Mueller I."/>
            <person name="Mullikin J.C."/>
            <person name="Nguyen N."/>
            <person name="Nordsiek G."/>
            <person name="Nyakatura G."/>
            <person name="O'dell C.N."/>
            <person name="Okwuonu G."/>
            <person name="Palmer S."/>
            <person name="Pandian R."/>
            <person name="Parker D."/>
            <person name="Parrish J."/>
            <person name="Pasternak S."/>
            <person name="Patel D."/>
            <person name="Pearce A.V."/>
            <person name="Pearson D.M."/>
            <person name="Pelan S.E."/>
            <person name="Perez L."/>
            <person name="Porter K.M."/>
            <person name="Ramsey Y."/>
            <person name="Reichwald K."/>
            <person name="Rhodes S."/>
            <person name="Ridler K.A."/>
            <person name="Schlessinger D."/>
            <person name="Schueler M.G."/>
            <person name="Sehra H.K."/>
            <person name="Shaw-Smith C."/>
            <person name="Shen H."/>
            <person name="Sheridan E.M."/>
            <person name="Shownkeen R."/>
            <person name="Skuce C.D."/>
            <person name="Smith M.L."/>
            <person name="Sotheran E.C."/>
            <person name="Steingruber H.E."/>
            <person name="Steward C.A."/>
            <person name="Storey R."/>
            <person name="Swann R.M."/>
            <person name="Swarbreck D."/>
            <person name="Tabor P.E."/>
            <person name="Taudien S."/>
            <person name="Taylor T."/>
            <person name="Teague B."/>
            <person name="Thomas K."/>
            <person name="Thorpe A."/>
            <person name="Timms K."/>
            <person name="Tracey A."/>
            <person name="Trevanion S."/>
            <person name="Tromans A.C."/>
            <person name="d'Urso M."/>
            <person name="Verduzco D."/>
            <person name="Villasana D."/>
            <person name="Waldron L."/>
            <person name="Wall M."/>
            <person name="Wang Q."/>
            <person name="Warren J."/>
            <person name="Warry G.L."/>
            <person name="Wei X."/>
            <person name="West A."/>
            <person name="Whitehead S.L."/>
            <person name="Whiteley M.N."/>
            <person name="Wilkinson J.E."/>
            <person name="Willey D.L."/>
            <person name="Williams G."/>
            <person name="Williams L."/>
            <person name="Williamson A."/>
            <person name="Williamson H."/>
            <person name="Wilming L."/>
            <person name="Woodmansey R.L."/>
            <person name="Wray P.W."/>
            <person name="Yen J."/>
            <person name="Zhang J."/>
            <person name="Zhou J."/>
            <person name="Zoghbi H."/>
            <person name="Zorilla S."/>
            <person name="Buck D."/>
            <person name="Reinhardt R."/>
            <person name="Poustka A."/>
            <person name="Rosenthal A."/>
            <person name="Lehrach H."/>
            <person name="Meindl A."/>
            <person name="Minx P.J."/>
            <person name="Hillier L.W."/>
            <person name="Willard H.F."/>
            <person name="Wilson R.K."/>
            <person name="Waterston R.H."/>
            <person name="Rice C.M."/>
            <person name="Vaudin M."/>
            <person name="Coulson A."/>
            <person name="Nelson D.L."/>
            <person name="Weinstock G."/>
            <person name="Sulston J.E."/>
            <person name="Durbin R.M."/>
            <person name="Hubbard T."/>
            <person name="Gibbs R.A."/>
            <person name="Beck S."/>
            <person name="Rogers J."/>
            <person name="Bentley D.R."/>
        </authorList>
    </citation>
    <scope>NUCLEOTIDE SEQUENCE [LARGE SCALE GENOMIC DNA]</scope>
</reference>
<reference key="4">
    <citation type="submission" date="2002-08" db="EMBL/GenBank/DDBJ databases">
        <authorList>
            <person name="Naoko S."/>
            <person name="Tanaka Y."/>
            <person name="Iwata T."/>
        </authorList>
    </citation>
    <scope>NUCLEOTIDE SEQUENCE [MRNA] (ISOFORM 1)</scope>
</reference>
<reference key="5">
    <citation type="journal article" date="2004" name="Genome Res.">
        <title>The status, quality, and expansion of the NIH full-length cDNA project: the Mammalian Gene Collection (MGC).</title>
        <authorList>
            <consortium name="The MGC Project Team"/>
        </authorList>
    </citation>
    <scope>NUCLEOTIDE SEQUENCE [LARGE SCALE MRNA] (ISOFORMS 1; 2 AND 3)</scope>
    <scope>VARIANT ASN-60</scope>
</reference>
<reference key="6">
    <citation type="journal article" date="1994" name="Nat. Genet.">
        <title>PBDX is the XG blood group gene.</title>
        <authorList>
            <person name="Ellis N.A."/>
            <person name="Tippett P."/>
            <person name="Petty A."/>
            <person name="Reid M."/>
            <person name="Weller P.A."/>
            <person name="Ye T.Z."/>
            <person name="German J."/>
            <person name="Goodfellow P.N."/>
            <person name="Thomas S."/>
            <person name="Banting G."/>
        </authorList>
    </citation>
    <scope>SUBCELLULAR LOCATION</scope>
</reference>
<reference key="7">
    <citation type="journal article" date="2000" name="Blood">
        <title>A study of the coregulation and tissue specificity of XG and MIC2 gene expression in eukaryotic cells.</title>
        <authorList>
            <person name="Fouchet C."/>
            <person name="Gane P."/>
            <person name="Huet M."/>
            <person name="Fellous M."/>
            <person name="Rouger P."/>
            <person name="Banting G."/>
            <person name="Cartron J.P."/>
            <person name="Lopez C."/>
        </authorList>
    </citation>
    <scope>TISSUE SPECIFICITY</scope>
</reference>
<organism>
    <name type="scientific">Homo sapiens</name>
    <name type="common">Human</name>
    <dbReference type="NCBI Taxonomy" id="9606"/>
    <lineage>
        <taxon>Eukaryota</taxon>
        <taxon>Metazoa</taxon>
        <taxon>Chordata</taxon>
        <taxon>Craniata</taxon>
        <taxon>Vertebrata</taxon>
        <taxon>Euteleostomi</taxon>
        <taxon>Mammalia</taxon>
        <taxon>Eutheria</taxon>
        <taxon>Euarchontoglires</taxon>
        <taxon>Primates</taxon>
        <taxon>Haplorrhini</taxon>
        <taxon>Catarrhini</taxon>
        <taxon>Hominidae</taxon>
        <taxon>Homo</taxon>
    </lineage>
</organism>